<dbReference type="EMBL" id="AE014296">
    <property type="protein sequence ID" value="AAF49786.2"/>
    <property type="status" value="ALT_SEQ"/>
    <property type="molecule type" value="Genomic_DNA"/>
</dbReference>
<dbReference type="EMBL" id="AE014296">
    <property type="protein sequence ID" value="AAF49787.2"/>
    <property type="molecule type" value="Genomic_DNA"/>
</dbReference>
<dbReference type="EMBL" id="AY095527">
    <property type="protein sequence ID" value="AAM12258.1"/>
    <property type="molecule type" value="mRNA"/>
</dbReference>
<dbReference type="RefSeq" id="NP_729935.1">
    <property type="nucleotide sequence ID" value="NM_168563.2"/>
</dbReference>
<dbReference type="RefSeq" id="NP_729936.1">
    <property type="nucleotide sequence ID" value="NM_168564.2"/>
</dbReference>
<dbReference type="SMR" id="Q8SWR2"/>
<dbReference type="BioGRID" id="64878">
    <property type="interactions" value="6"/>
</dbReference>
<dbReference type="FunCoup" id="Q8SWR2">
    <property type="interactions" value="39"/>
</dbReference>
<dbReference type="IntAct" id="Q8SWR2">
    <property type="interactions" value="5"/>
</dbReference>
<dbReference type="STRING" id="7227.FBpp0075500"/>
<dbReference type="GlyGen" id="Q8SWR2">
    <property type="glycosylation" value="1 site"/>
</dbReference>
<dbReference type="PaxDb" id="7227-FBpp0075500"/>
<dbReference type="DNASU" id="39537"/>
<dbReference type="EnsemblMetazoa" id="FBtr0075758">
    <property type="protein sequence ID" value="FBpp0075500"/>
    <property type="gene ID" value="FBgn0052137"/>
</dbReference>
<dbReference type="GeneID" id="39537"/>
<dbReference type="KEGG" id="dme:Dmel_CG32137"/>
<dbReference type="UCSC" id="CG32137-RA">
    <property type="organism name" value="d. melanogaster"/>
</dbReference>
<dbReference type="AGR" id="FB:FBgn0052137"/>
<dbReference type="FlyBase" id="FBgn0052137">
    <property type="gene designation" value="BicDR"/>
</dbReference>
<dbReference type="VEuPathDB" id="VectorBase:FBgn0052137"/>
<dbReference type="eggNOG" id="ENOG502QUA9">
    <property type="taxonomic scope" value="Eukaryota"/>
</dbReference>
<dbReference type="GeneTree" id="ENSGT00940000171206"/>
<dbReference type="InParanoid" id="Q8SWR2"/>
<dbReference type="OMA" id="PRQFGQY"/>
<dbReference type="OrthoDB" id="9451547at2759"/>
<dbReference type="PhylomeDB" id="Q8SWR2"/>
<dbReference type="BioGRID-ORCS" id="39537">
    <property type="hits" value="0 hits in 3 CRISPR screens"/>
</dbReference>
<dbReference type="ChiTaRS" id="CG32137">
    <property type="organism name" value="fly"/>
</dbReference>
<dbReference type="GenomeRNAi" id="39537"/>
<dbReference type="PRO" id="PR:Q8SWR2"/>
<dbReference type="Proteomes" id="UP000000803">
    <property type="component" value="Chromosome 3L"/>
</dbReference>
<dbReference type="Bgee" id="FBgn0052137">
    <property type="expression patterns" value="Expressed in antennal olfactory receptor neuron of basiconic sensillum in antenna and 178 other cell types or tissues"/>
</dbReference>
<dbReference type="ExpressionAtlas" id="Q8SWR2">
    <property type="expression patterns" value="baseline and differential"/>
</dbReference>
<dbReference type="GO" id="GO:0005829">
    <property type="term" value="C:cytosol"/>
    <property type="evidence" value="ECO:0000305"/>
    <property type="project" value="FlyBase"/>
</dbReference>
<dbReference type="GO" id="GO:0140312">
    <property type="term" value="F:cargo adaptor activity"/>
    <property type="evidence" value="ECO:0000315"/>
    <property type="project" value="FlyBase"/>
</dbReference>
<dbReference type="GO" id="GO:0022416">
    <property type="term" value="P:chaeta development"/>
    <property type="evidence" value="ECO:0000316"/>
    <property type="project" value="FlyBase"/>
</dbReference>
<dbReference type="GO" id="GO:0098840">
    <property type="term" value="P:protein transport along microtubule"/>
    <property type="evidence" value="ECO:0000315"/>
    <property type="project" value="FlyBase"/>
</dbReference>
<dbReference type="InterPro" id="IPR051149">
    <property type="entry name" value="Spindly/BICDR_Dynein_Adapter"/>
</dbReference>
<dbReference type="PANTHER" id="PTHR32123:SF13">
    <property type="entry name" value="BICAUDAL D-RELATED PROTEIN HOMOLOG"/>
    <property type="match status" value="1"/>
</dbReference>
<dbReference type="PANTHER" id="PTHR32123">
    <property type="entry name" value="BICD FAMILY-LIKE CARGO ADAPTER"/>
    <property type="match status" value="1"/>
</dbReference>
<proteinExistence type="evidence at protein level"/>
<feature type="chain" id="PRO_0000302865" description="Bicaudal D-related protein homolog">
    <location>
        <begin position="1"/>
        <end position="620"/>
    </location>
</feature>
<feature type="region of interest" description="Disordered" evidence="2">
    <location>
        <begin position="23"/>
        <end position="53"/>
    </location>
</feature>
<feature type="region of interest" description="Disordered" evidence="2">
    <location>
        <begin position="493"/>
        <end position="528"/>
    </location>
</feature>
<feature type="coiled-coil region" evidence="1">
    <location>
        <begin position="120"/>
        <end position="331"/>
    </location>
</feature>
<feature type="coiled-coil region" evidence="1">
    <location>
        <begin position="461"/>
        <end position="575"/>
    </location>
</feature>
<feature type="compositionally biased region" description="Low complexity" evidence="2">
    <location>
        <begin position="23"/>
        <end position="41"/>
    </location>
</feature>
<feature type="compositionally biased region" description="Basic and acidic residues" evidence="2">
    <location>
        <begin position="493"/>
        <end position="503"/>
    </location>
</feature>
<feature type="compositionally biased region" description="Basic and acidic residues" evidence="2">
    <location>
        <begin position="509"/>
        <end position="528"/>
    </location>
</feature>
<feature type="mutagenesis site" description="Abrogates interaction with eEF1gamma." evidence="3">
    <original>K</original>
    <variation>A</variation>
    <location>
        <position position="555"/>
    </location>
</feature>
<accession>Q8SWR2</accession>
<accession>Q9VUA2</accession>
<accession>Q9VUA3</accession>
<comment type="function">
    <text evidence="3">Functions redundantly with BicD (PubMed:38264934). Involved in formation and/or development of mechanosensory organs during metamorphosis (PubMed:38264934). During macrochaetae development, together with BicD, involved in Rab 6 and Spn-F stability and distribution and actin cytoskeleton organization (PubMed:38264934).</text>
</comment>
<comment type="subunit">
    <text evidence="3">May homodimerize but does not interact with BicD (PubMed:38264934). May interact with eEF1gamma; The interaction is probably indirect (PubMed:38264934).</text>
</comment>
<comment type="developmental stage">
    <text evidence="3">Strongly expressed in salivary gland cells from embryogenesis stage 14 onwards (at protein level) (PubMed:38264934). Metameric expression pattern along the lateral side of the embryo during stages 11-14 of embryogenesis (at protein level) (PubMed:38264934).</text>
</comment>
<comment type="disruption phenotype">
    <text evidence="3">Viable and fertile (PubMed:38264934). Post eclosion discolored, short and brittle posterior scutellar bristle macrochaetae; this phenotype is more common in females than in males (PubMed:38264934). Pupal to adult lethal when combined with mutations in BicD (PubMed:38264934).</text>
</comment>
<comment type="similarity">
    <text evidence="4">Belongs to the BICDR family.</text>
</comment>
<comment type="sequence caution" evidence="4">
    <conflict type="erroneous gene model prediction">
        <sequence resource="EMBL-CDS" id="AAF49786"/>
    </conflict>
</comment>
<evidence type="ECO:0000255" key="1"/>
<evidence type="ECO:0000256" key="2">
    <source>
        <dbReference type="SAM" id="MobiDB-lite"/>
    </source>
</evidence>
<evidence type="ECO:0000269" key="3">
    <source>
    </source>
</evidence>
<evidence type="ECO:0000305" key="4"/>
<evidence type="ECO:0000312" key="5">
    <source>
        <dbReference type="EMBL" id="AAM12258.1"/>
    </source>
</evidence>
<evidence type="ECO:0000312" key="6">
    <source>
        <dbReference type="FlyBase" id="FBgn0052137"/>
    </source>
</evidence>
<evidence type="ECO:0000312" key="7">
    <source>
        <dbReference type="Proteomes" id="UP000000803"/>
    </source>
</evidence>
<reference key="1">
    <citation type="journal article" date="2000" name="Science">
        <title>The genome sequence of Drosophila melanogaster.</title>
        <authorList>
            <person name="Adams M.D."/>
            <person name="Celniker S.E."/>
            <person name="Holt R.A."/>
            <person name="Evans C.A."/>
            <person name="Gocayne J.D."/>
            <person name="Amanatides P.G."/>
            <person name="Scherer S.E."/>
            <person name="Li P.W."/>
            <person name="Hoskins R.A."/>
            <person name="Galle R.F."/>
            <person name="George R.A."/>
            <person name="Lewis S.E."/>
            <person name="Richards S."/>
            <person name="Ashburner M."/>
            <person name="Henderson S.N."/>
            <person name="Sutton G.G."/>
            <person name="Wortman J.R."/>
            <person name="Yandell M.D."/>
            <person name="Zhang Q."/>
            <person name="Chen L.X."/>
            <person name="Brandon R.C."/>
            <person name="Rogers Y.-H.C."/>
            <person name="Blazej R.G."/>
            <person name="Champe M."/>
            <person name="Pfeiffer B.D."/>
            <person name="Wan K.H."/>
            <person name="Doyle C."/>
            <person name="Baxter E.G."/>
            <person name="Helt G."/>
            <person name="Nelson C.R."/>
            <person name="Miklos G.L.G."/>
            <person name="Abril J.F."/>
            <person name="Agbayani A."/>
            <person name="An H.-J."/>
            <person name="Andrews-Pfannkoch C."/>
            <person name="Baldwin D."/>
            <person name="Ballew R.M."/>
            <person name="Basu A."/>
            <person name="Baxendale J."/>
            <person name="Bayraktaroglu L."/>
            <person name="Beasley E.M."/>
            <person name="Beeson K.Y."/>
            <person name="Benos P.V."/>
            <person name="Berman B.P."/>
            <person name="Bhandari D."/>
            <person name="Bolshakov S."/>
            <person name="Borkova D."/>
            <person name="Botchan M.R."/>
            <person name="Bouck J."/>
            <person name="Brokstein P."/>
            <person name="Brottier P."/>
            <person name="Burtis K.C."/>
            <person name="Busam D.A."/>
            <person name="Butler H."/>
            <person name="Cadieu E."/>
            <person name="Center A."/>
            <person name="Chandra I."/>
            <person name="Cherry J.M."/>
            <person name="Cawley S."/>
            <person name="Dahlke C."/>
            <person name="Davenport L.B."/>
            <person name="Davies P."/>
            <person name="de Pablos B."/>
            <person name="Delcher A."/>
            <person name="Deng Z."/>
            <person name="Mays A.D."/>
            <person name="Dew I."/>
            <person name="Dietz S.M."/>
            <person name="Dodson K."/>
            <person name="Doup L.E."/>
            <person name="Downes M."/>
            <person name="Dugan-Rocha S."/>
            <person name="Dunkov B.C."/>
            <person name="Dunn P."/>
            <person name="Durbin K.J."/>
            <person name="Evangelista C.C."/>
            <person name="Ferraz C."/>
            <person name="Ferriera S."/>
            <person name="Fleischmann W."/>
            <person name="Fosler C."/>
            <person name="Gabrielian A.E."/>
            <person name="Garg N.S."/>
            <person name="Gelbart W.M."/>
            <person name="Glasser K."/>
            <person name="Glodek A."/>
            <person name="Gong F."/>
            <person name="Gorrell J.H."/>
            <person name="Gu Z."/>
            <person name="Guan P."/>
            <person name="Harris M."/>
            <person name="Harris N.L."/>
            <person name="Harvey D.A."/>
            <person name="Heiman T.J."/>
            <person name="Hernandez J.R."/>
            <person name="Houck J."/>
            <person name="Hostin D."/>
            <person name="Houston K.A."/>
            <person name="Howland T.J."/>
            <person name="Wei M.-H."/>
            <person name="Ibegwam C."/>
            <person name="Jalali M."/>
            <person name="Kalush F."/>
            <person name="Karpen G.H."/>
            <person name="Ke Z."/>
            <person name="Kennison J.A."/>
            <person name="Ketchum K.A."/>
            <person name="Kimmel B.E."/>
            <person name="Kodira C.D."/>
            <person name="Kraft C.L."/>
            <person name="Kravitz S."/>
            <person name="Kulp D."/>
            <person name="Lai Z."/>
            <person name="Lasko P."/>
            <person name="Lei Y."/>
            <person name="Levitsky A.A."/>
            <person name="Li J.H."/>
            <person name="Li Z."/>
            <person name="Liang Y."/>
            <person name="Lin X."/>
            <person name="Liu X."/>
            <person name="Mattei B."/>
            <person name="McIntosh T.C."/>
            <person name="McLeod M.P."/>
            <person name="McPherson D."/>
            <person name="Merkulov G."/>
            <person name="Milshina N.V."/>
            <person name="Mobarry C."/>
            <person name="Morris J."/>
            <person name="Moshrefi A."/>
            <person name="Mount S.M."/>
            <person name="Moy M."/>
            <person name="Murphy B."/>
            <person name="Murphy L."/>
            <person name="Muzny D.M."/>
            <person name="Nelson D.L."/>
            <person name="Nelson D.R."/>
            <person name="Nelson K.A."/>
            <person name="Nixon K."/>
            <person name="Nusskern D.R."/>
            <person name="Pacleb J.M."/>
            <person name="Palazzolo M."/>
            <person name="Pittman G.S."/>
            <person name="Pan S."/>
            <person name="Pollard J."/>
            <person name="Puri V."/>
            <person name="Reese M.G."/>
            <person name="Reinert K."/>
            <person name="Remington K."/>
            <person name="Saunders R.D.C."/>
            <person name="Scheeler F."/>
            <person name="Shen H."/>
            <person name="Shue B.C."/>
            <person name="Siden-Kiamos I."/>
            <person name="Simpson M."/>
            <person name="Skupski M.P."/>
            <person name="Smith T.J."/>
            <person name="Spier E."/>
            <person name="Spradling A.C."/>
            <person name="Stapleton M."/>
            <person name="Strong R."/>
            <person name="Sun E."/>
            <person name="Svirskas R."/>
            <person name="Tector C."/>
            <person name="Turner R."/>
            <person name="Venter E."/>
            <person name="Wang A.H."/>
            <person name="Wang X."/>
            <person name="Wang Z.-Y."/>
            <person name="Wassarman D.A."/>
            <person name="Weinstock G.M."/>
            <person name="Weissenbach J."/>
            <person name="Williams S.M."/>
            <person name="Woodage T."/>
            <person name="Worley K.C."/>
            <person name="Wu D."/>
            <person name="Yang S."/>
            <person name="Yao Q.A."/>
            <person name="Ye J."/>
            <person name="Yeh R.-F."/>
            <person name="Zaveri J.S."/>
            <person name="Zhan M."/>
            <person name="Zhang G."/>
            <person name="Zhao Q."/>
            <person name="Zheng L."/>
            <person name="Zheng X.H."/>
            <person name="Zhong F.N."/>
            <person name="Zhong W."/>
            <person name="Zhou X."/>
            <person name="Zhu S.C."/>
            <person name="Zhu X."/>
            <person name="Smith H.O."/>
            <person name="Gibbs R.A."/>
            <person name="Myers E.W."/>
            <person name="Rubin G.M."/>
            <person name="Venter J.C."/>
        </authorList>
    </citation>
    <scope>NUCLEOTIDE SEQUENCE [LARGE SCALE GENOMIC DNA]</scope>
    <source>
        <strain>Berkeley</strain>
    </source>
</reference>
<reference key="2">
    <citation type="journal article" date="2002" name="Genome Biol.">
        <title>Annotation of the Drosophila melanogaster euchromatic genome: a systematic review.</title>
        <authorList>
            <person name="Misra S."/>
            <person name="Crosby M.A."/>
            <person name="Mungall C.J."/>
            <person name="Matthews B.B."/>
            <person name="Campbell K.S."/>
            <person name="Hradecky P."/>
            <person name="Huang Y."/>
            <person name="Kaminker J.S."/>
            <person name="Millburn G.H."/>
            <person name="Prochnik S.E."/>
            <person name="Smith C.D."/>
            <person name="Tupy J.L."/>
            <person name="Whitfield E.J."/>
            <person name="Bayraktaroglu L."/>
            <person name="Berman B.P."/>
            <person name="Bettencourt B.R."/>
            <person name="Celniker S.E."/>
            <person name="de Grey A.D.N.J."/>
            <person name="Drysdale R.A."/>
            <person name="Harris N.L."/>
            <person name="Richter J."/>
            <person name="Russo S."/>
            <person name="Schroeder A.J."/>
            <person name="Shu S.Q."/>
            <person name="Stapleton M."/>
            <person name="Yamada C."/>
            <person name="Ashburner M."/>
            <person name="Gelbart W.M."/>
            <person name="Rubin G.M."/>
            <person name="Lewis S.E."/>
        </authorList>
    </citation>
    <scope>GENOME REANNOTATION</scope>
    <source>
        <strain>Berkeley</strain>
    </source>
</reference>
<reference evidence="5" key="3">
    <citation type="journal article" date="2002" name="Genome Biol.">
        <title>A Drosophila full-length cDNA resource.</title>
        <authorList>
            <person name="Stapleton M."/>
            <person name="Carlson J.W."/>
            <person name="Brokstein P."/>
            <person name="Yu C."/>
            <person name="Champe M."/>
            <person name="George R.A."/>
            <person name="Guarin H."/>
            <person name="Kronmiller B."/>
            <person name="Pacleb J.M."/>
            <person name="Park S."/>
            <person name="Wan K.H."/>
            <person name="Rubin G.M."/>
            <person name="Celniker S.E."/>
        </authorList>
    </citation>
    <scope>NUCLEOTIDE SEQUENCE [LARGE SCALE MRNA]</scope>
    <source>
        <strain>Berkeley</strain>
        <tissue>Embryo</tissue>
    </source>
</reference>
<reference key="4">
    <citation type="journal article" date="2024" name="J. Cell Sci.">
        <title>Role of BicDR in bristle shaft construction and support of BicD functions.</title>
        <authorList>
            <person name="Jejina A."/>
            <person name="Ayala Y."/>
            <person name="Beuchle D."/>
            <person name="Hoehener T."/>
            <person name="Doerig R.E."/>
            <person name="Vazquez-Pianzola P."/>
            <person name="Hernandez G."/>
            <person name="Suter B."/>
        </authorList>
    </citation>
    <scope>FUNCTION</scope>
    <scope>SUBUNIT</scope>
    <scope>INTERACTION WITH EEF1GAMMA</scope>
    <scope>DEVELOPMENTAL STAGE</scope>
    <scope>DISRUPTION PHENOTYPE</scope>
    <scope>MUTAGENESIS OF LYS-555</scope>
</reference>
<keyword id="KW-0175">Coiled coil</keyword>
<keyword id="KW-1185">Reference proteome</keyword>
<gene>
    <name evidence="6" type="primary">BicDR</name>
    <name type="ORF">CG17365</name>
    <name evidence="6" type="ORF">CG32137</name>
</gene>
<name>BICDR_DROME</name>
<organism evidence="7">
    <name type="scientific">Drosophila melanogaster</name>
    <name type="common">Fruit fly</name>
    <dbReference type="NCBI Taxonomy" id="7227"/>
    <lineage>
        <taxon>Eukaryota</taxon>
        <taxon>Metazoa</taxon>
        <taxon>Ecdysozoa</taxon>
        <taxon>Arthropoda</taxon>
        <taxon>Hexapoda</taxon>
        <taxon>Insecta</taxon>
        <taxon>Pterygota</taxon>
        <taxon>Neoptera</taxon>
        <taxon>Endopterygota</taxon>
        <taxon>Diptera</taxon>
        <taxon>Brachycera</taxon>
        <taxon>Muscomorpha</taxon>
        <taxon>Ephydroidea</taxon>
        <taxon>Drosophilidae</taxon>
        <taxon>Drosophila</taxon>
        <taxon>Sophophora</taxon>
    </lineage>
</organism>
<sequence length="620" mass="70236">MHKPKLANAITAAAIASSISTKNNNNNSIVGGSSSSSSGGNKSKRPRQFGQYSIGVGTGAGAGGLLRSDDSGFDHLDYSSLIGDSIDLEHYISAMEARRHDQEPDVWAQLQQKESDILLAAELGKALLEKNEELVKQQEKLIEDYSSKIEKLEQEKHVLRQKLAIAEDESDQRVLELQSDLTELKDKLQTQDTAIRQAEKEKTILIDELQHQNTRLTEQIQEAHATELKLSAQIQELKDQYHYRNSSLQEHVNSLESIKTELNLTTGKRQELERRLQIAQEEKESLTSSLEESSDRIHMLERHAREQETKLETTLQALERSQRENNVLSERLGADTNSSTPGRKSLQFEMECDEDDGSYTETGKPNQMFVEARSVYIQLKSLVDSLKVSHDDDSGLNSDISLELESMDNTISSSERHEDGHLAIEFRQGMLSSMSDELTRLLLNLDAGNFKKMLDQTRNLVLEQEDEIKRSHQLIQQLEAKVTVTDVELQNVKEERDQARGDLEDNTDRDELLSKAQTERDAANDRRTKAEVELAKTRVELMQANSQLLESIQQKVELSQQLEQWQMDMHELIDEQMRSKLINNRRAMAAESSAPSPPSSAAANLAKRVTSYKLWSLFQR</sequence>
<protein>
    <recommendedName>
        <fullName evidence="6">Bicaudal D-related protein homolog</fullName>
        <shortName>BICD-related protein homolog</shortName>
    </recommendedName>
</protein>